<gene>
    <name evidence="1" type="primary">lipB</name>
    <name type="ordered locus">Bd0766</name>
</gene>
<accession>Q6MPS6</accession>
<feature type="chain" id="PRO_0000062813" description="Octanoyltransferase">
    <location>
        <begin position="1"/>
        <end position="219"/>
    </location>
</feature>
<feature type="domain" description="BPL/LPL catalytic" evidence="2">
    <location>
        <begin position="31"/>
        <end position="219"/>
    </location>
</feature>
<feature type="active site" description="Acyl-thioester intermediate" evidence="1">
    <location>
        <position position="184"/>
    </location>
</feature>
<feature type="binding site" evidence="1">
    <location>
        <begin position="69"/>
        <end position="76"/>
    </location>
    <ligand>
        <name>substrate</name>
    </ligand>
</feature>
<feature type="binding site" evidence="1">
    <location>
        <begin position="153"/>
        <end position="155"/>
    </location>
    <ligand>
        <name>substrate</name>
    </ligand>
</feature>
<feature type="binding site" evidence="1">
    <location>
        <begin position="166"/>
        <end position="168"/>
    </location>
    <ligand>
        <name>substrate</name>
    </ligand>
</feature>
<feature type="site" description="Lowers pKa of active site Cys" evidence="1">
    <location>
        <position position="150"/>
    </location>
</feature>
<name>LIPB_BDEBA</name>
<organism>
    <name type="scientific">Bdellovibrio bacteriovorus (strain ATCC 15356 / DSM 50701 / NCIMB 9529 / HD100)</name>
    <dbReference type="NCBI Taxonomy" id="264462"/>
    <lineage>
        <taxon>Bacteria</taxon>
        <taxon>Pseudomonadati</taxon>
        <taxon>Bdellovibrionota</taxon>
        <taxon>Bdellovibrionia</taxon>
        <taxon>Bdellovibrionales</taxon>
        <taxon>Pseudobdellovibrionaceae</taxon>
        <taxon>Bdellovibrio</taxon>
    </lineage>
</organism>
<evidence type="ECO:0000255" key="1">
    <source>
        <dbReference type="HAMAP-Rule" id="MF_00013"/>
    </source>
</evidence>
<evidence type="ECO:0000255" key="2">
    <source>
        <dbReference type="PROSITE-ProRule" id="PRU01067"/>
    </source>
</evidence>
<evidence type="ECO:0000305" key="3"/>
<reference key="1">
    <citation type="journal article" date="2004" name="Science">
        <title>A predator unmasked: life cycle of Bdellovibrio bacteriovorus from a genomic perspective.</title>
        <authorList>
            <person name="Rendulic S."/>
            <person name="Jagtap P."/>
            <person name="Rosinus A."/>
            <person name="Eppinger M."/>
            <person name="Baar C."/>
            <person name="Lanz C."/>
            <person name="Keller H."/>
            <person name="Lambert C."/>
            <person name="Evans K.J."/>
            <person name="Goesmann A."/>
            <person name="Meyer F."/>
            <person name="Sockett R.E."/>
            <person name="Schuster S.C."/>
        </authorList>
    </citation>
    <scope>NUCLEOTIDE SEQUENCE [LARGE SCALE GENOMIC DNA]</scope>
    <source>
        <strain>ATCC 15356 / DSM 50701 / NCIMB 9529 / HD100</strain>
    </source>
</reference>
<sequence>MADLIFQDWGLINYDEALKKQNDLVEKVHTEDLPGFLVFCTHPPVVTVGRATQAGDVFSWNGPVVEVTRGGRATYHGPSQLVVYPILNLAHVRKGRKDREINPYLKVFEDAIVDVLKTYGLTGIEGRSSAKSSFNRADADDTGVWVNDLKIASVGVGVRKWVAFHGAAINLTFDEKAFLGLRPCGFPSEVMVSLEQLTGAKVDVGEFKEKLKRRLLEVL</sequence>
<protein>
    <recommendedName>
        <fullName evidence="1">Octanoyltransferase</fullName>
        <ecNumber evidence="1">2.3.1.181</ecNumber>
    </recommendedName>
    <alternativeName>
        <fullName evidence="1">Lipoate-protein ligase B</fullName>
    </alternativeName>
    <alternativeName>
        <fullName evidence="1">Lipoyl/octanoyl transferase</fullName>
    </alternativeName>
    <alternativeName>
        <fullName evidence="1">Octanoyl-[acyl-carrier-protein]-protein N-octanoyltransferase</fullName>
    </alternativeName>
</protein>
<keyword id="KW-0012">Acyltransferase</keyword>
<keyword id="KW-0963">Cytoplasm</keyword>
<keyword id="KW-1185">Reference proteome</keyword>
<keyword id="KW-0808">Transferase</keyword>
<proteinExistence type="inferred from homology"/>
<dbReference type="EC" id="2.3.1.181" evidence="1"/>
<dbReference type="EMBL" id="BX842648">
    <property type="protein sequence ID" value="CAE78721.1"/>
    <property type="status" value="ALT_INIT"/>
    <property type="molecule type" value="Genomic_DNA"/>
</dbReference>
<dbReference type="RefSeq" id="WP_038451513.1">
    <property type="nucleotide sequence ID" value="NC_005363.1"/>
</dbReference>
<dbReference type="SMR" id="Q6MPS6"/>
<dbReference type="STRING" id="264462.Bd0766"/>
<dbReference type="GeneID" id="93011849"/>
<dbReference type="KEGG" id="bba:Bd0766"/>
<dbReference type="eggNOG" id="COG0321">
    <property type="taxonomic scope" value="Bacteria"/>
</dbReference>
<dbReference type="HOGENOM" id="CLU_035168_3_0_7"/>
<dbReference type="UniPathway" id="UPA00538">
    <property type="reaction ID" value="UER00592"/>
</dbReference>
<dbReference type="Proteomes" id="UP000008080">
    <property type="component" value="Chromosome"/>
</dbReference>
<dbReference type="GO" id="GO:0005737">
    <property type="term" value="C:cytoplasm"/>
    <property type="evidence" value="ECO:0007669"/>
    <property type="project" value="UniProtKB-SubCell"/>
</dbReference>
<dbReference type="GO" id="GO:0033819">
    <property type="term" value="F:lipoyl(octanoyl) transferase activity"/>
    <property type="evidence" value="ECO:0007669"/>
    <property type="project" value="UniProtKB-EC"/>
</dbReference>
<dbReference type="GO" id="GO:0036211">
    <property type="term" value="P:protein modification process"/>
    <property type="evidence" value="ECO:0007669"/>
    <property type="project" value="InterPro"/>
</dbReference>
<dbReference type="CDD" id="cd16444">
    <property type="entry name" value="LipB"/>
    <property type="match status" value="1"/>
</dbReference>
<dbReference type="Gene3D" id="3.30.930.10">
    <property type="entry name" value="Bira Bifunctional Protein, Domain 2"/>
    <property type="match status" value="1"/>
</dbReference>
<dbReference type="HAMAP" id="MF_00013">
    <property type="entry name" value="LipB"/>
    <property type="match status" value="1"/>
</dbReference>
<dbReference type="InterPro" id="IPR045864">
    <property type="entry name" value="aa-tRNA-synth_II/BPL/LPL"/>
</dbReference>
<dbReference type="InterPro" id="IPR004143">
    <property type="entry name" value="BPL_LPL_catalytic"/>
</dbReference>
<dbReference type="InterPro" id="IPR000544">
    <property type="entry name" value="Octanoyltransferase"/>
</dbReference>
<dbReference type="InterPro" id="IPR020605">
    <property type="entry name" value="Octanoyltransferase_CS"/>
</dbReference>
<dbReference type="NCBIfam" id="TIGR00214">
    <property type="entry name" value="lipB"/>
    <property type="match status" value="1"/>
</dbReference>
<dbReference type="PANTHER" id="PTHR10993:SF7">
    <property type="entry name" value="LIPOYLTRANSFERASE 2, MITOCHONDRIAL-RELATED"/>
    <property type="match status" value="1"/>
</dbReference>
<dbReference type="PANTHER" id="PTHR10993">
    <property type="entry name" value="OCTANOYLTRANSFERASE"/>
    <property type="match status" value="1"/>
</dbReference>
<dbReference type="Pfam" id="PF21948">
    <property type="entry name" value="LplA-B_cat"/>
    <property type="match status" value="1"/>
</dbReference>
<dbReference type="PIRSF" id="PIRSF016262">
    <property type="entry name" value="LPLase"/>
    <property type="match status" value="1"/>
</dbReference>
<dbReference type="SUPFAM" id="SSF55681">
    <property type="entry name" value="Class II aaRS and biotin synthetases"/>
    <property type="match status" value="1"/>
</dbReference>
<dbReference type="PROSITE" id="PS51733">
    <property type="entry name" value="BPL_LPL_CATALYTIC"/>
    <property type="match status" value="1"/>
</dbReference>
<dbReference type="PROSITE" id="PS01313">
    <property type="entry name" value="LIPB"/>
    <property type="match status" value="1"/>
</dbReference>
<comment type="function">
    <text evidence="1">Catalyzes the transfer of endogenously produced octanoic acid from octanoyl-acyl-carrier-protein onto the lipoyl domains of lipoate-dependent enzymes. Lipoyl-ACP can also act as a substrate although octanoyl-ACP is likely to be the physiological substrate.</text>
</comment>
<comment type="catalytic activity">
    <reaction evidence="1">
        <text>octanoyl-[ACP] + L-lysyl-[protein] = N(6)-octanoyl-L-lysyl-[protein] + holo-[ACP] + H(+)</text>
        <dbReference type="Rhea" id="RHEA:17665"/>
        <dbReference type="Rhea" id="RHEA-COMP:9636"/>
        <dbReference type="Rhea" id="RHEA-COMP:9685"/>
        <dbReference type="Rhea" id="RHEA-COMP:9752"/>
        <dbReference type="Rhea" id="RHEA-COMP:9928"/>
        <dbReference type="ChEBI" id="CHEBI:15378"/>
        <dbReference type="ChEBI" id="CHEBI:29969"/>
        <dbReference type="ChEBI" id="CHEBI:64479"/>
        <dbReference type="ChEBI" id="CHEBI:78463"/>
        <dbReference type="ChEBI" id="CHEBI:78809"/>
        <dbReference type="EC" id="2.3.1.181"/>
    </reaction>
</comment>
<comment type="pathway">
    <text evidence="1">Protein modification; protein lipoylation via endogenous pathway; protein N(6)-(lipoyl)lysine from octanoyl-[acyl-carrier-protein]: step 1/2.</text>
</comment>
<comment type="subcellular location">
    <subcellularLocation>
        <location evidence="1">Cytoplasm</location>
    </subcellularLocation>
</comment>
<comment type="miscellaneous">
    <text evidence="1">In the reaction, the free carboxyl group of octanoic acid is attached via an amide linkage to the epsilon-amino group of a specific lysine residue of lipoyl domains of lipoate-dependent enzymes.</text>
</comment>
<comment type="similarity">
    <text evidence="1">Belongs to the LipB family.</text>
</comment>
<comment type="sequence caution" evidence="3">
    <conflict type="erroneous initiation">
        <sequence resource="EMBL-CDS" id="CAE78721"/>
    </conflict>
    <text>Extended N-terminus.</text>
</comment>